<feature type="chain" id="PRO_1000117810" description="F420-dependent methylenetetrahydromethanopterin dehydrogenase">
    <location>
        <begin position="1"/>
        <end position="280"/>
    </location>
</feature>
<name>MTD_METHJ</name>
<keyword id="KW-0484">Methanogenesis</keyword>
<keyword id="KW-0554">One-carbon metabolism</keyword>
<keyword id="KW-0560">Oxidoreductase</keyword>
<keyword id="KW-1185">Reference proteome</keyword>
<organism>
    <name type="scientific">Methanospirillum hungatei JF-1 (strain ATCC 27890 / DSM 864 / NBRC 100397 / JF-1)</name>
    <dbReference type="NCBI Taxonomy" id="323259"/>
    <lineage>
        <taxon>Archaea</taxon>
        <taxon>Methanobacteriati</taxon>
        <taxon>Methanobacteriota</taxon>
        <taxon>Stenosarchaea group</taxon>
        <taxon>Methanomicrobia</taxon>
        <taxon>Methanomicrobiales</taxon>
        <taxon>Methanospirillaceae</taxon>
        <taxon>Methanospirillum</taxon>
    </lineage>
</organism>
<sequence>MVVKVGIAKLGNIASGVMAELLLDERADREDMQTFMATSGTKLQPEDIDRVVTNMKAWGPDFCIVVSPNGVLPGPKGAREALAAAGIPCVVITDDITTKKEEWEALKASEFGYVIMKGDSMIGARREFLDPIEMADYNGNLIKVLSITGAFRKLQVALDEVIDQVKAGKKGKDLALPKLVMTSDKAVEGEFSNPYAYAKARAAYEIAQAVAGVNVKGCFMTKGFENYTPIVASAHEMMRQAMLLCEEAREMEKATDAVIRKPHKNDGTRVAKKTLISKPE</sequence>
<gene>
    <name evidence="1" type="primary">mtd</name>
    <name type="ordered locus">Mhun_2255</name>
</gene>
<comment type="function">
    <text evidence="1">Catalyzes the reversible reduction of methenyl-H(4)MPT(+) to methylene-H(4)MPT.</text>
</comment>
<comment type="catalytic activity">
    <reaction evidence="1">
        <text>5,10-methylenetetrahydromethanopterin + oxidized coenzyme F420-(gamma-L-Glu)(n) + 2 H(+) = 5,10-methenyl-5,6,7,8-tetrahydromethanopterin + reduced coenzyme F420-(gamma-L-Glu)(n)</text>
        <dbReference type="Rhea" id="RHEA:16721"/>
        <dbReference type="Rhea" id="RHEA-COMP:12939"/>
        <dbReference type="Rhea" id="RHEA-COMP:14378"/>
        <dbReference type="ChEBI" id="CHEBI:15378"/>
        <dbReference type="ChEBI" id="CHEBI:57818"/>
        <dbReference type="ChEBI" id="CHEBI:58337"/>
        <dbReference type="ChEBI" id="CHEBI:133980"/>
        <dbReference type="ChEBI" id="CHEBI:139511"/>
        <dbReference type="EC" id="1.5.98.1"/>
    </reaction>
</comment>
<comment type="pathway">
    <text evidence="1">One-carbon metabolism; methanogenesis from CO(2); 5,10-methylene-5,6,7,8-tetrahydromethanopterin from 5,10-methenyl-5,6,7,8-tetrahydromethanopterin (coenzyme F420 route): step 1/1.</text>
</comment>
<comment type="similarity">
    <text evidence="1">Belongs to the MTD family.</text>
</comment>
<dbReference type="EC" id="1.5.98.1" evidence="1"/>
<dbReference type="EMBL" id="CP000254">
    <property type="protein sequence ID" value="ABD41960.1"/>
    <property type="molecule type" value="Genomic_DNA"/>
</dbReference>
<dbReference type="RefSeq" id="WP_011449218.1">
    <property type="nucleotide sequence ID" value="NC_007796.1"/>
</dbReference>
<dbReference type="SMR" id="Q2FU89"/>
<dbReference type="FunCoup" id="Q2FU89">
    <property type="interactions" value="67"/>
</dbReference>
<dbReference type="STRING" id="323259.Mhun_2255"/>
<dbReference type="EnsemblBacteria" id="ABD41960">
    <property type="protein sequence ID" value="ABD41960"/>
    <property type="gene ID" value="Mhun_2255"/>
</dbReference>
<dbReference type="GeneID" id="3924216"/>
<dbReference type="KEGG" id="mhu:Mhun_2255"/>
<dbReference type="eggNOG" id="arCOG04382">
    <property type="taxonomic scope" value="Archaea"/>
</dbReference>
<dbReference type="HOGENOM" id="CLU_1006890_0_0_2"/>
<dbReference type="InParanoid" id="Q2FU89"/>
<dbReference type="OrthoDB" id="49844at2157"/>
<dbReference type="UniPathway" id="UPA00640">
    <property type="reaction ID" value="UER00695"/>
</dbReference>
<dbReference type="Proteomes" id="UP000001941">
    <property type="component" value="Chromosome"/>
</dbReference>
<dbReference type="GO" id="GO:0008901">
    <property type="term" value="F:ferredoxin hydrogenase activity"/>
    <property type="evidence" value="ECO:0007669"/>
    <property type="project" value="InterPro"/>
</dbReference>
<dbReference type="GO" id="GO:0030268">
    <property type="term" value="F:methylenetetrahydromethanopterin dehydrogenase activity"/>
    <property type="evidence" value="ECO:0007669"/>
    <property type="project" value="UniProtKB-UniRule"/>
</dbReference>
<dbReference type="GO" id="GO:0019386">
    <property type="term" value="P:methanogenesis, from carbon dioxide"/>
    <property type="evidence" value="ECO:0007669"/>
    <property type="project" value="UniProtKB-UniRule"/>
</dbReference>
<dbReference type="GO" id="GO:0006730">
    <property type="term" value="P:one-carbon metabolic process"/>
    <property type="evidence" value="ECO:0007669"/>
    <property type="project" value="UniProtKB-UniRule"/>
</dbReference>
<dbReference type="Gene3D" id="6.10.140.120">
    <property type="match status" value="1"/>
</dbReference>
<dbReference type="Gene3D" id="3.40.50.10830">
    <property type="entry name" value="F420-dependent methylenetetrahydromethanopterin dehydrogenase (MTD)"/>
    <property type="match status" value="1"/>
</dbReference>
<dbReference type="HAMAP" id="MF_00058">
    <property type="entry name" value="MTD"/>
    <property type="match status" value="1"/>
</dbReference>
<dbReference type="InterPro" id="IPR002844">
    <property type="entry name" value="MTD"/>
</dbReference>
<dbReference type="InterPro" id="IPR036080">
    <property type="entry name" value="MTD_sf"/>
</dbReference>
<dbReference type="NCBIfam" id="NF002162">
    <property type="entry name" value="PRK00994.1"/>
    <property type="match status" value="1"/>
</dbReference>
<dbReference type="Pfam" id="PF01993">
    <property type="entry name" value="MTD"/>
    <property type="match status" value="1"/>
</dbReference>
<dbReference type="PIRSF" id="PIRSF005627">
    <property type="entry name" value="MTD"/>
    <property type="match status" value="1"/>
</dbReference>
<dbReference type="SUPFAM" id="SSF102324">
    <property type="entry name" value="F420-dependent methylenetetrahydromethanopterin dehydrogenase (MTD)"/>
    <property type="match status" value="1"/>
</dbReference>
<accession>Q2FU89</accession>
<protein>
    <recommendedName>
        <fullName evidence="1">F420-dependent methylenetetrahydromethanopterin dehydrogenase</fullName>
        <shortName evidence="1">MTD</shortName>
        <ecNumber evidence="1">1.5.98.1</ecNumber>
    </recommendedName>
    <alternativeName>
        <fullName evidence="1">Coenzyme F420-dependent N5,N10-methylenetetrahydromethanopterin dehydrogenase</fullName>
    </alternativeName>
</protein>
<proteinExistence type="inferred from homology"/>
<evidence type="ECO:0000255" key="1">
    <source>
        <dbReference type="HAMAP-Rule" id="MF_00058"/>
    </source>
</evidence>
<reference key="1">
    <citation type="journal article" date="2016" name="Stand. Genomic Sci.">
        <title>Complete genome sequence of Methanospirillum hungatei type strain JF1.</title>
        <authorList>
            <person name="Gunsalus R.P."/>
            <person name="Cook L.E."/>
            <person name="Crable B."/>
            <person name="Rohlin L."/>
            <person name="McDonald E."/>
            <person name="Mouttaki H."/>
            <person name="Sieber J.R."/>
            <person name="Poweleit N."/>
            <person name="Zhou H."/>
            <person name="Lapidus A.L."/>
            <person name="Daligault H.E."/>
            <person name="Land M."/>
            <person name="Gilna P."/>
            <person name="Ivanova N."/>
            <person name="Kyrpides N."/>
            <person name="Culley D.E."/>
            <person name="McInerney M.J."/>
        </authorList>
    </citation>
    <scope>NUCLEOTIDE SEQUENCE [LARGE SCALE GENOMIC DNA]</scope>
    <source>
        <strain>ATCC 27890 / DSM 864 / NBRC 100397 / JF-1</strain>
    </source>
</reference>